<dbReference type="EMBL" id="CP000247">
    <property type="protein sequence ID" value="ABG69030.1"/>
    <property type="molecule type" value="Genomic_DNA"/>
</dbReference>
<dbReference type="RefSeq" id="WP_000154419.1">
    <property type="nucleotide sequence ID" value="NC_008253.1"/>
</dbReference>
<dbReference type="SMR" id="Q0TJ49"/>
<dbReference type="KEGG" id="ecp:ECP_1017"/>
<dbReference type="HOGENOM" id="CLU_050342_2_1_6"/>
<dbReference type="Proteomes" id="UP000009182">
    <property type="component" value="Chromosome"/>
</dbReference>
<dbReference type="GO" id="GO:0042597">
    <property type="term" value="C:periplasmic space"/>
    <property type="evidence" value="ECO:0007669"/>
    <property type="project" value="UniProtKB-SubCell"/>
</dbReference>
<dbReference type="CDD" id="cd14656">
    <property type="entry name" value="Imelysin-like_EfeO"/>
    <property type="match status" value="1"/>
</dbReference>
<dbReference type="FunFam" id="1.20.1420.20:FF:000001">
    <property type="entry name" value="Iron uptake system component EfeO"/>
    <property type="match status" value="1"/>
</dbReference>
<dbReference type="FunFam" id="2.60.40.420:FF:000052">
    <property type="entry name" value="Iron uptake system component EfeO"/>
    <property type="match status" value="1"/>
</dbReference>
<dbReference type="Gene3D" id="2.60.40.420">
    <property type="entry name" value="Cupredoxins - blue copper proteins"/>
    <property type="match status" value="1"/>
</dbReference>
<dbReference type="Gene3D" id="1.20.1420.20">
    <property type="entry name" value="M75 peptidase, HXXE motif"/>
    <property type="match status" value="1"/>
</dbReference>
<dbReference type="InterPro" id="IPR008972">
    <property type="entry name" value="Cupredoxin"/>
</dbReference>
<dbReference type="InterPro" id="IPR050894">
    <property type="entry name" value="EfeM/EfeO_iron_uptake"/>
</dbReference>
<dbReference type="InterPro" id="IPR028096">
    <property type="entry name" value="EfeO_Cupredoxin"/>
</dbReference>
<dbReference type="InterPro" id="IPR018976">
    <property type="entry name" value="Imelysin-like"/>
</dbReference>
<dbReference type="InterPro" id="IPR034981">
    <property type="entry name" value="Imelysin-like_EfeO/Algp7"/>
</dbReference>
<dbReference type="InterPro" id="IPR038352">
    <property type="entry name" value="Imelysin_sf"/>
</dbReference>
<dbReference type="InterPro" id="IPR053377">
    <property type="entry name" value="Iron_uptake_EfeM/EfeO"/>
</dbReference>
<dbReference type="NCBIfam" id="NF041757">
    <property type="entry name" value="EfeO"/>
    <property type="match status" value="1"/>
</dbReference>
<dbReference type="NCBIfam" id="NF007697">
    <property type="entry name" value="PRK10378.1"/>
    <property type="match status" value="1"/>
</dbReference>
<dbReference type="PANTHER" id="PTHR39192">
    <property type="entry name" value="IRON UPTAKE SYSTEM COMPONENT EFEO"/>
    <property type="match status" value="1"/>
</dbReference>
<dbReference type="PANTHER" id="PTHR39192:SF1">
    <property type="entry name" value="IRON UPTAKE SYSTEM COMPONENT EFEO"/>
    <property type="match status" value="1"/>
</dbReference>
<dbReference type="Pfam" id="PF13473">
    <property type="entry name" value="Cupredoxin_1"/>
    <property type="match status" value="1"/>
</dbReference>
<dbReference type="Pfam" id="PF09375">
    <property type="entry name" value="Peptidase_M75"/>
    <property type="match status" value="1"/>
</dbReference>
<dbReference type="SUPFAM" id="SSF49503">
    <property type="entry name" value="Cupredoxins"/>
    <property type="match status" value="1"/>
</dbReference>
<evidence type="ECO:0000250" key="1"/>
<evidence type="ECO:0000255" key="2"/>
<evidence type="ECO:0000305" key="3"/>
<protein>
    <recommendedName>
        <fullName>Iron uptake system component EfeO</fullName>
    </recommendedName>
</protein>
<organism>
    <name type="scientific">Escherichia coli O6:K15:H31 (strain 536 / UPEC)</name>
    <dbReference type="NCBI Taxonomy" id="362663"/>
    <lineage>
        <taxon>Bacteria</taxon>
        <taxon>Pseudomonadati</taxon>
        <taxon>Pseudomonadota</taxon>
        <taxon>Gammaproteobacteria</taxon>
        <taxon>Enterobacterales</taxon>
        <taxon>Enterobacteriaceae</taxon>
        <taxon>Escherichia</taxon>
    </lineage>
</organism>
<feature type="signal peptide" evidence="2">
    <location>
        <begin position="1"/>
        <end position="26"/>
    </location>
</feature>
<feature type="chain" id="PRO_0000278557" description="Iron uptake system component EfeO">
    <location>
        <begin position="27"/>
        <end position="375"/>
    </location>
</feature>
<keyword id="KW-0574">Periplasm</keyword>
<keyword id="KW-0732">Signal</keyword>
<accession>Q0TJ49</accession>
<name>EFEO_ECOL5</name>
<reference key="1">
    <citation type="journal article" date="2006" name="Mol. Microbiol.">
        <title>Role of pathogenicity island-associated integrases in the genome plasticity of uropathogenic Escherichia coli strain 536.</title>
        <authorList>
            <person name="Hochhut B."/>
            <person name="Wilde C."/>
            <person name="Balling G."/>
            <person name="Middendorf B."/>
            <person name="Dobrindt U."/>
            <person name="Brzuszkiewicz E."/>
            <person name="Gottschalk G."/>
            <person name="Carniel E."/>
            <person name="Hacker J."/>
        </authorList>
    </citation>
    <scope>NUCLEOTIDE SEQUENCE [LARGE SCALE GENOMIC DNA]</scope>
    <source>
        <strain>536 / UPEC</strain>
    </source>
</reference>
<gene>
    <name type="primary">efeO</name>
    <name type="ordered locus">ECP_1017</name>
</gene>
<comment type="function">
    <text evidence="1">Involved in Fe(2+) uptake. Could be an iron-binding and/or electron-transfer component (By similarity).</text>
</comment>
<comment type="subunit">
    <text evidence="1">Monomer. Part of a ferrous iron transporter composed of EfeU, EfeO and EfeB (By similarity).</text>
</comment>
<comment type="subcellular location">
    <subcellularLocation>
        <location evidence="1">Periplasm</location>
    </subcellularLocation>
</comment>
<comment type="similarity">
    <text evidence="3">Belongs to the EfeM/EfeO family.</text>
</comment>
<sequence>MTINFRRNALQVSVAALFSSAFMANAADIPQVKVTVTDKQCEPMTITVNAGKTQFIIQNHSQKALEWEILKGVMVVEERENIAPGFSQKMTANLQPGEYDMTCGLLTNPKGKLIVKGEATADAAQSDALLSLGGAITAYKAYVMAETTQLVTDTKAFTDAIKAGDIEKAKALYAPTRQHYERIEPIAELFSDLDGSIDAREDDYEQKAADPKFTGFHRLEKALFGDNTTKGMDKYADQLYTDVVDLQKRISELAFPPSKVVGGAAGLIEEVAASKISGEEDRYSHTDLWDFQANVEGSQKIVDLLRPQLQKANPELLAKVDANFKKVDTILAKYRTKDGFENYDKLTDADRNALKGPITALAEDLAQLRGVLGLD</sequence>
<proteinExistence type="inferred from homology"/>